<protein>
    <recommendedName>
        <fullName>2',3'-cyclic-nucleotide 2'-phosphodiesterase/3'-nucleotidase</fullName>
        <ecNumber>3.1.3.6</ecNumber>
        <ecNumber>3.1.4.16</ecNumber>
    </recommendedName>
</protein>
<keyword id="KW-0378">Hydrolase</keyword>
<keyword id="KW-0479">Metal-binding</keyword>
<keyword id="KW-0511">Multifunctional enzyme</keyword>
<keyword id="KW-0547">Nucleotide-binding</keyword>
<keyword id="KW-0574">Periplasm</keyword>
<keyword id="KW-1185">Reference proteome</keyword>
<keyword id="KW-0732">Signal</keyword>
<name>CPDB_HAEIN</name>
<accession>P44764</accession>
<organism>
    <name type="scientific">Haemophilus influenzae (strain ATCC 51907 / DSM 11121 / KW20 / Rd)</name>
    <dbReference type="NCBI Taxonomy" id="71421"/>
    <lineage>
        <taxon>Bacteria</taxon>
        <taxon>Pseudomonadati</taxon>
        <taxon>Pseudomonadota</taxon>
        <taxon>Gammaproteobacteria</taxon>
        <taxon>Pasteurellales</taxon>
        <taxon>Pasteurellaceae</taxon>
        <taxon>Haemophilus</taxon>
    </lineage>
</organism>
<reference key="1">
    <citation type="journal article" date="1995" name="Science">
        <title>Whole-genome random sequencing and assembly of Haemophilus influenzae Rd.</title>
        <authorList>
            <person name="Fleischmann R.D."/>
            <person name="Adams M.D."/>
            <person name="White O."/>
            <person name="Clayton R.A."/>
            <person name="Kirkness E.F."/>
            <person name="Kerlavage A.R."/>
            <person name="Bult C.J."/>
            <person name="Tomb J.-F."/>
            <person name="Dougherty B.A."/>
            <person name="Merrick J.M."/>
            <person name="McKenney K."/>
            <person name="Sutton G.G."/>
            <person name="FitzHugh W."/>
            <person name="Fields C.A."/>
            <person name="Gocayne J.D."/>
            <person name="Scott J.D."/>
            <person name="Shirley R."/>
            <person name="Liu L.-I."/>
            <person name="Glodek A."/>
            <person name="Kelley J.M."/>
            <person name="Weidman J.F."/>
            <person name="Phillips C.A."/>
            <person name="Spriggs T."/>
            <person name="Hedblom E."/>
            <person name="Cotton M.D."/>
            <person name="Utterback T.R."/>
            <person name="Hanna M.C."/>
            <person name="Nguyen D.T."/>
            <person name="Saudek D.M."/>
            <person name="Brandon R.C."/>
            <person name="Fine L.D."/>
            <person name="Fritchman J.L."/>
            <person name="Fuhrmann J.L."/>
            <person name="Geoghagen N.S.M."/>
            <person name="Gnehm C.L."/>
            <person name="McDonald L.A."/>
            <person name="Small K.V."/>
            <person name="Fraser C.M."/>
            <person name="Smith H.O."/>
            <person name="Venter J.C."/>
        </authorList>
    </citation>
    <scope>NUCLEOTIDE SEQUENCE [LARGE SCALE GENOMIC DNA]</scope>
    <source>
        <strain>ATCC 51907 / DSM 11121 / KW20 / Rd</strain>
    </source>
</reference>
<sequence length="657" mass="72763">MMNRRHFIQISATSILALSANRFAMAKGKSDVDLRIVATTDVHSFLTDFDYYKDAPTDKFGFTRAASLIRQARAEVKNSVLVDNGDLIQGNPIADYQAAQGYKEGKSNPAIDCLNAMNYEVGTLGNHEFNYGLNYLADAIKQAKFPIVNSNVVKAGTEEPYFTPYVIQEKSVVDNQGKTHKLKIGYIGFVPPQIMVWDKANLQGKVETRDIVKTAQKYVPEMKKKGADIVVALAHTGPSDEPYQEGAENSAFYLADVPHIDAVIFGHSHRLFPNKEFAKSPNADIVNGTVKGIPESMAGYWANNISVVDLGLTEHKGKWIVTSGKAVLRPIYDIETKKALAKNDPEITALLKPVHEATRKYVSQPIGKATDNMYSYLALLQDDPTIQIVNQAQKAYVEKVAPSIAAMAGLPILSAGAPFKAGGRKNDPTGYTEVNKGKLTFRNAADLYLYPNTLVVVKATGEQLKEWLECSAGMFKQIDPTSDKPQSLIDWEGFRTYNFDVIDGVNYEYDLTKPARYDGECKLINPESHRVVNLTYQGKPVDPKAEFLIATNNYRAYGNKFPGTGDKHIVYASPDESRQILADYIKATSEKEGSVNPNADKNWRFVPITGNDKLDVRFETSPSEQAAKFIAEKAQYPMKQVGTDEIGFAVYQIDLSK</sequence>
<dbReference type="EC" id="3.1.3.6"/>
<dbReference type="EC" id="3.1.4.16"/>
<dbReference type="EMBL" id="L42023">
    <property type="protein sequence ID" value="AAC22242.1"/>
    <property type="molecule type" value="Genomic_DNA"/>
</dbReference>
<dbReference type="PIR" id="A64079">
    <property type="entry name" value="A64079"/>
</dbReference>
<dbReference type="RefSeq" id="NP_438741.1">
    <property type="nucleotide sequence ID" value="NC_000907.1"/>
</dbReference>
<dbReference type="SMR" id="P44764"/>
<dbReference type="STRING" id="71421.HI_0583"/>
<dbReference type="DNASU" id="949588"/>
<dbReference type="EnsemblBacteria" id="AAC22242">
    <property type="protein sequence ID" value="AAC22242"/>
    <property type="gene ID" value="HI_0583"/>
</dbReference>
<dbReference type="KEGG" id="hin:HI_0583"/>
<dbReference type="PATRIC" id="fig|71421.8.peg.604"/>
<dbReference type="eggNOG" id="COG0737">
    <property type="taxonomic scope" value="Bacteria"/>
</dbReference>
<dbReference type="HOGENOM" id="CLU_005854_4_1_6"/>
<dbReference type="OrthoDB" id="9803927at2"/>
<dbReference type="PhylomeDB" id="P44764"/>
<dbReference type="BioCyc" id="HINF71421:G1GJ1-596-MONOMER"/>
<dbReference type="Proteomes" id="UP000000579">
    <property type="component" value="Chromosome"/>
</dbReference>
<dbReference type="GO" id="GO:0030288">
    <property type="term" value="C:outer membrane-bounded periplasmic space"/>
    <property type="evidence" value="ECO:0000318"/>
    <property type="project" value="GO_Central"/>
</dbReference>
<dbReference type="GO" id="GO:0008663">
    <property type="term" value="F:2',3'-cyclic-nucleotide 2'-phosphodiesterase activity"/>
    <property type="evidence" value="ECO:0007669"/>
    <property type="project" value="UniProtKB-EC"/>
</dbReference>
<dbReference type="GO" id="GO:0008254">
    <property type="term" value="F:3'-nucleotidase activity"/>
    <property type="evidence" value="ECO:0007669"/>
    <property type="project" value="UniProtKB-EC"/>
</dbReference>
<dbReference type="GO" id="GO:0046872">
    <property type="term" value="F:metal ion binding"/>
    <property type="evidence" value="ECO:0007669"/>
    <property type="project" value="UniProtKB-KW"/>
</dbReference>
<dbReference type="GO" id="GO:0000166">
    <property type="term" value="F:nucleotide binding"/>
    <property type="evidence" value="ECO:0007669"/>
    <property type="project" value="UniProtKB-KW"/>
</dbReference>
<dbReference type="GO" id="GO:0009166">
    <property type="term" value="P:nucleotide catabolic process"/>
    <property type="evidence" value="ECO:0007669"/>
    <property type="project" value="InterPro"/>
</dbReference>
<dbReference type="CDD" id="cd07410">
    <property type="entry name" value="MPP_CpdB_N"/>
    <property type="match status" value="1"/>
</dbReference>
<dbReference type="FunFam" id="3.60.21.10:FF:000037">
    <property type="entry name" value="Bifunctional 2',3'-cyclic-nucleotide 2'-phosphodiesterase/3'-nucleotidase"/>
    <property type="match status" value="1"/>
</dbReference>
<dbReference type="FunFam" id="3.90.780.10:FF:000002">
    <property type="entry name" value="Bifunctional 2',3'-cyclic-nucleotide 2'-phosphodiesterase/3'-nucleotidase"/>
    <property type="match status" value="1"/>
</dbReference>
<dbReference type="Gene3D" id="3.60.21.10">
    <property type="match status" value="1"/>
</dbReference>
<dbReference type="Gene3D" id="3.90.780.10">
    <property type="entry name" value="5'-Nucleotidase, C-terminal domain"/>
    <property type="match status" value="1"/>
</dbReference>
<dbReference type="InterPro" id="IPR008334">
    <property type="entry name" value="5'-Nucleotdase_C"/>
</dbReference>
<dbReference type="InterPro" id="IPR036907">
    <property type="entry name" value="5'-Nucleotdase_C_sf"/>
</dbReference>
<dbReference type="InterPro" id="IPR006146">
    <property type="entry name" value="5'-Nucleotdase_CS"/>
</dbReference>
<dbReference type="InterPro" id="IPR006179">
    <property type="entry name" value="5_nucleotidase/apyrase"/>
</dbReference>
<dbReference type="InterPro" id="IPR004843">
    <property type="entry name" value="Calcineurin-like_PHP_ApaH"/>
</dbReference>
<dbReference type="InterPro" id="IPR041827">
    <property type="entry name" value="CpdB_N"/>
</dbReference>
<dbReference type="InterPro" id="IPR006294">
    <property type="entry name" value="Cyc_nuc_PDE_nucleotidase"/>
</dbReference>
<dbReference type="InterPro" id="IPR029052">
    <property type="entry name" value="Metallo-depent_PP-like"/>
</dbReference>
<dbReference type="NCBIfam" id="TIGR01390">
    <property type="entry name" value="CycNucDiestase"/>
    <property type="match status" value="1"/>
</dbReference>
<dbReference type="NCBIfam" id="NF006938">
    <property type="entry name" value="PRK09420.1"/>
    <property type="match status" value="1"/>
</dbReference>
<dbReference type="PANTHER" id="PTHR11575:SF6">
    <property type="entry name" value="2',3'-CYCLIC-NUCLEOTIDE 2'-PHOSPHODIESTERASE_3'-NUCLEOTIDASE"/>
    <property type="match status" value="1"/>
</dbReference>
<dbReference type="PANTHER" id="PTHR11575">
    <property type="entry name" value="5'-NUCLEOTIDASE-RELATED"/>
    <property type="match status" value="1"/>
</dbReference>
<dbReference type="Pfam" id="PF02872">
    <property type="entry name" value="5_nucleotid_C"/>
    <property type="match status" value="1"/>
</dbReference>
<dbReference type="Pfam" id="PF00149">
    <property type="entry name" value="Metallophos"/>
    <property type="match status" value="1"/>
</dbReference>
<dbReference type="PRINTS" id="PR01607">
    <property type="entry name" value="APYRASEFAMLY"/>
</dbReference>
<dbReference type="SUPFAM" id="SSF55816">
    <property type="entry name" value="5'-nucleotidase (syn. UDP-sugar hydrolase), C-terminal domain"/>
    <property type="match status" value="1"/>
</dbReference>
<dbReference type="SUPFAM" id="SSF56300">
    <property type="entry name" value="Metallo-dependent phosphatases"/>
    <property type="match status" value="1"/>
</dbReference>
<dbReference type="PROSITE" id="PS00785">
    <property type="entry name" value="5_NUCLEOTIDASE_1"/>
    <property type="match status" value="1"/>
</dbReference>
<dbReference type="PROSITE" id="PS00786">
    <property type="entry name" value="5_NUCLEOTIDASE_2"/>
    <property type="match status" value="1"/>
</dbReference>
<proteinExistence type="inferred from homology"/>
<comment type="function">
    <text evidence="1">This bifunctional enzyme catalyzes two consecutive reactions during ribonucleic acid degradation. Converts a 2',3'-cyclic nucleotide to a 3'-nucleotide and then the 3'-nucleotide to the corresponding nucleoside and phosphate (By similarity).</text>
</comment>
<comment type="catalytic activity">
    <reaction>
        <text>a nucleoside 2',3'-cyclic phosphate + H2O = a nucleoside 3'-phosphate + H(+)</text>
        <dbReference type="Rhea" id="RHEA:19621"/>
        <dbReference type="ChEBI" id="CHEBI:15377"/>
        <dbReference type="ChEBI" id="CHEBI:15378"/>
        <dbReference type="ChEBI" id="CHEBI:66949"/>
        <dbReference type="ChEBI" id="CHEBI:66954"/>
        <dbReference type="EC" id="3.1.4.16"/>
    </reaction>
</comment>
<comment type="catalytic activity">
    <reaction>
        <text>a ribonucleoside 3'-phosphate + H2O = a ribonucleoside + phosphate</text>
        <dbReference type="Rhea" id="RHEA:10144"/>
        <dbReference type="ChEBI" id="CHEBI:13197"/>
        <dbReference type="ChEBI" id="CHEBI:15377"/>
        <dbReference type="ChEBI" id="CHEBI:18254"/>
        <dbReference type="ChEBI" id="CHEBI:43474"/>
        <dbReference type="EC" id="3.1.3.6"/>
    </reaction>
</comment>
<comment type="cofactor">
    <cofactor evidence="1">
        <name>a divalent metal cation</name>
        <dbReference type="ChEBI" id="CHEBI:60240"/>
    </cofactor>
</comment>
<comment type="subcellular location">
    <subcellularLocation>
        <location evidence="1">Periplasm</location>
    </subcellularLocation>
</comment>
<comment type="similarity">
    <text evidence="3">Belongs to the 5'-nucleotidase family.</text>
</comment>
<evidence type="ECO:0000250" key="1"/>
<evidence type="ECO:0000255" key="2"/>
<evidence type="ECO:0000305" key="3"/>
<feature type="signal peptide" evidence="2">
    <location>
        <begin position="1"/>
        <end position="26"/>
    </location>
</feature>
<feature type="chain" id="PRO_0000000037" description="2',3'-cyclic-nucleotide 2'-phosphodiesterase/3'-nucleotidase">
    <location>
        <begin position="27"/>
        <end position="657"/>
    </location>
</feature>
<feature type="binding site" evidence="1">
    <location>
        <position position="41"/>
    </location>
    <ligand>
        <name>a divalent metal cation</name>
        <dbReference type="ChEBI" id="CHEBI:60240"/>
        <label>1</label>
    </ligand>
</feature>
<feature type="binding site" evidence="1">
    <location>
        <position position="43"/>
    </location>
    <ligand>
        <name>a divalent metal cation</name>
        <dbReference type="ChEBI" id="CHEBI:60240"/>
        <label>1</label>
    </ligand>
</feature>
<feature type="binding site" evidence="1">
    <location>
        <position position="86"/>
    </location>
    <ligand>
        <name>a divalent metal cation</name>
        <dbReference type="ChEBI" id="CHEBI:60240"/>
        <label>1</label>
    </ligand>
</feature>
<feature type="binding site" evidence="1">
    <location>
        <position position="86"/>
    </location>
    <ligand>
        <name>a divalent metal cation</name>
        <dbReference type="ChEBI" id="CHEBI:60240"/>
        <label>2</label>
    </ligand>
</feature>
<feature type="binding site" evidence="1">
    <location>
        <position position="126"/>
    </location>
    <ligand>
        <name>a divalent metal cation</name>
        <dbReference type="ChEBI" id="CHEBI:60240"/>
        <label>2</label>
    </ligand>
</feature>
<feature type="binding site" evidence="1">
    <location>
        <position position="235"/>
    </location>
    <ligand>
        <name>a divalent metal cation</name>
        <dbReference type="ChEBI" id="CHEBI:60240"/>
        <label>2</label>
    </ligand>
</feature>
<feature type="binding site" evidence="1">
    <location>
        <position position="267"/>
    </location>
    <ligand>
        <name>a divalent metal cation</name>
        <dbReference type="ChEBI" id="CHEBI:60240"/>
        <label>2</label>
    </ligand>
</feature>
<feature type="binding site" evidence="1">
    <location>
        <position position="269"/>
    </location>
    <ligand>
        <name>a divalent metal cation</name>
        <dbReference type="ChEBI" id="CHEBI:60240"/>
        <label>1</label>
    </ligand>
</feature>
<feature type="binding site" evidence="1">
    <location>
        <position position="450"/>
    </location>
    <ligand>
        <name>substrate</name>
    </ligand>
</feature>
<feature type="binding site" evidence="1">
    <location>
        <begin position="554"/>
        <end position="559"/>
    </location>
    <ligand>
        <name>substrate</name>
    </ligand>
</feature>
<gene>
    <name type="primary">cpdB</name>
    <name type="ordered locus">HI_0583</name>
</gene>